<name>RL4_KORVE</name>
<sequence>MATIDVVNLSGEKVGSFELADEVFGAVNEDLLWEAVKHYRAGQHRGTHATKNKKLVSGAGKKLWKQKGTGRARVGSIRSPLWRHGGTVHGPQPRSYDYAFPRKKLLGALRSALAAKLADGKLTVVESFDVKEPKANAFRKTLAGLKVDKTALLIESAENKNLELSSRNLKGVELVAGNAVHPYHLLRYDRAVIARPALEKLQNSLKKAASKRHAEVA</sequence>
<comment type="function">
    <text evidence="1">One of the primary rRNA binding proteins, this protein initially binds near the 5'-end of the 23S rRNA. It is important during the early stages of 50S assembly. It makes multiple contacts with different domains of the 23S rRNA in the assembled 50S subunit and ribosome.</text>
</comment>
<comment type="function">
    <text evidence="1">Forms part of the polypeptide exit tunnel.</text>
</comment>
<comment type="subunit">
    <text evidence="1">Part of the 50S ribosomal subunit.</text>
</comment>
<comment type="similarity">
    <text evidence="1">Belongs to the universal ribosomal protein uL4 family.</text>
</comment>
<protein>
    <recommendedName>
        <fullName evidence="1">Large ribosomal subunit protein uL4</fullName>
    </recommendedName>
    <alternativeName>
        <fullName evidence="2">50S ribosomal protein L4</fullName>
    </alternativeName>
</protein>
<reference key="1">
    <citation type="journal article" date="2009" name="Appl. Environ. Microbiol.">
        <title>Three genomes from the phylum Acidobacteria provide insight into the lifestyles of these microorganisms in soils.</title>
        <authorList>
            <person name="Ward N.L."/>
            <person name="Challacombe J.F."/>
            <person name="Janssen P.H."/>
            <person name="Henrissat B."/>
            <person name="Coutinho P.M."/>
            <person name="Wu M."/>
            <person name="Xie G."/>
            <person name="Haft D.H."/>
            <person name="Sait M."/>
            <person name="Badger J."/>
            <person name="Barabote R.D."/>
            <person name="Bradley B."/>
            <person name="Brettin T.S."/>
            <person name="Brinkac L.M."/>
            <person name="Bruce D."/>
            <person name="Creasy T."/>
            <person name="Daugherty S.C."/>
            <person name="Davidsen T.M."/>
            <person name="DeBoy R.T."/>
            <person name="Detter J.C."/>
            <person name="Dodson R.J."/>
            <person name="Durkin A.S."/>
            <person name="Ganapathy A."/>
            <person name="Gwinn-Giglio M."/>
            <person name="Han C.S."/>
            <person name="Khouri H."/>
            <person name="Kiss H."/>
            <person name="Kothari S.P."/>
            <person name="Madupu R."/>
            <person name="Nelson K.E."/>
            <person name="Nelson W.C."/>
            <person name="Paulsen I."/>
            <person name="Penn K."/>
            <person name="Ren Q."/>
            <person name="Rosovitz M.J."/>
            <person name="Selengut J.D."/>
            <person name="Shrivastava S."/>
            <person name="Sullivan S.A."/>
            <person name="Tapia R."/>
            <person name="Thompson L.S."/>
            <person name="Watkins K.L."/>
            <person name="Yang Q."/>
            <person name="Yu C."/>
            <person name="Zafar N."/>
            <person name="Zhou L."/>
            <person name="Kuske C.R."/>
        </authorList>
    </citation>
    <scope>NUCLEOTIDE SEQUENCE [LARGE SCALE GENOMIC DNA]</scope>
    <source>
        <strain>Ellin345</strain>
    </source>
</reference>
<keyword id="KW-1185">Reference proteome</keyword>
<keyword id="KW-0687">Ribonucleoprotein</keyword>
<keyword id="KW-0689">Ribosomal protein</keyword>
<keyword id="KW-0694">RNA-binding</keyword>
<keyword id="KW-0699">rRNA-binding</keyword>
<dbReference type="EMBL" id="CP000360">
    <property type="protein sequence ID" value="ABF40229.1"/>
    <property type="molecule type" value="Genomic_DNA"/>
</dbReference>
<dbReference type="RefSeq" id="WP_011522031.1">
    <property type="nucleotide sequence ID" value="NC_008009.1"/>
</dbReference>
<dbReference type="SMR" id="Q1ISC1"/>
<dbReference type="STRING" id="204669.Acid345_1227"/>
<dbReference type="EnsemblBacteria" id="ABF40229">
    <property type="protein sequence ID" value="ABF40229"/>
    <property type="gene ID" value="Acid345_1227"/>
</dbReference>
<dbReference type="KEGG" id="aba:Acid345_1227"/>
<dbReference type="eggNOG" id="COG0088">
    <property type="taxonomic scope" value="Bacteria"/>
</dbReference>
<dbReference type="HOGENOM" id="CLU_041575_5_2_0"/>
<dbReference type="OrthoDB" id="9803201at2"/>
<dbReference type="Proteomes" id="UP000002432">
    <property type="component" value="Chromosome"/>
</dbReference>
<dbReference type="GO" id="GO:1990904">
    <property type="term" value="C:ribonucleoprotein complex"/>
    <property type="evidence" value="ECO:0007669"/>
    <property type="project" value="UniProtKB-KW"/>
</dbReference>
<dbReference type="GO" id="GO:0005840">
    <property type="term" value="C:ribosome"/>
    <property type="evidence" value="ECO:0007669"/>
    <property type="project" value="UniProtKB-KW"/>
</dbReference>
<dbReference type="GO" id="GO:0019843">
    <property type="term" value="F:rRNA binding"/>
    <property type="evidence" value="ECO:0007669"/>
    <property type="project" value="UniProtKB-UniRule"/>
</dbReference>
<dbReference type="GO" id="GO:0003735">
    <property type="term" value="F:structural constituent of ribosome"/>
    <property type="evidence" value="ECO:0007669"/>
    <property type="project" value="InterPro"/>
</dbReference>
<dbReference type="GO" id="GO:0006412">
    <property type="term" value="P:translation"/>
    <property type="evidence" value="ECO:0007669"/>
    <property type="project" value="UniProtKB-UniRule"/>
</dbReference>
<dbReference type="Gene3D" id="3.40.1370.10">
    <property type="match status" value="1"/>
</dbReference>
<dbReference type="HAMAP" id="MF_01328_B">
    <property type="entry name" value="Ribosomal_uL4_B"/>
    <property type="match status" value="1"/>
</dbReference>
<dbReference type="InterPro" id="IPR002136">
    <property type="entry name" value="Ribosomal_uL4"/>
</dbReference>
<dbReference type="InterPro" id="IPR013005">
    <property type="entry name" value="Ribosomal_uL4-like"/>
</dbReference>
<dbReference type="InterPro" id="IPR023574">
    <property type="entry name" value="Ribosomal_uL4_dom_sf"/>
</dbReference>
<dbReference type="NCBIfam" id="TIGR03953">
    <property type="entry name" value="rplD_bact"/>
    <property type="match status" value="1"/>
</dbReference>
<dbReference type="PANTHER" id="PTHR10746">
    <property type="entry name" value="50S RIBOSOMAL PROTEIN L4"/>
    <property type="match status" value="1"/>
</dbReference>
<dbReference type="PANTHER" id="PTHR10746:SF6">
    <property type="entry name" value="LARGE RIBOSOMAL SUBUNIT PROTEIN UL4M"/>
    <property type="match status" value="1"/>
</dbReference>
<dbReference type="Pfam" id="PF00573">
    <property type="entry name" value="Ribosomal_L4"/>
    <property type="match status" value="1"/>
</dbReference>
<dbReference type="SUPFAM" id="SSF52166">
    <property type="entry name" value="Ribosomal protein L4"/>
    <property type="match status" value="1"/>
</dbReference>
<proteinExistence type="inferred from homology"/>
<gene>
    <name evidence="1" type="primary">rplD</name>
    <name type="ordered locus">Acid345_1227</name>
</gene>
<evidence type="ECO:0000255" key="1">
    <source>
        <dbReference type="HAMAP-Rule" id="MF_01328"/>
    </source>
</evidence>
<evidence type="ECO:0000305" key="2"/>
<feature type="chain" id="PRO_1000052344" description="Large ribosomal subunit protein uL4">
    <location>
        <begin position="1"/>
        <end position="217"/>
    </location>
</feature>
<organism>
    <name type="scientific">Koribacter versatilis (strain Ellin345)</name>
    <dbReference type="NCBI Taxonomy" id="204669"/>
    <lineage>
        <taxon>Bacteria</taxon>
        <taxon>Pseudomonadati</taxon>
        <taxon>Acidobacteriota</taxon>
        <taxon>Terriglobia</taxon>
        <taxon>Terriglobales</taxon>
        <taxon>Candidatus Korobacteraceae</taxon>
        <taxon>Candidatus Korobacter</taxon>
    </lineage>
</organism>
<accession>Q1ISC1</accession>